<dbReference type="EC" id="2.5.1.41" evidence="1"/>
<dbReference type="EMBL" id="CP000968">
    <property type="protein sequence ID" value="ACB08137.1"/>
    <property type="status" value="ALT_INIT"/>
    <property type="molecule type" value="Genomic_DNA"/>
</dbReference>
<dbReference type="RefSeq" id="WP_052568471.1">
    <property type="nucleotide sequence ID" value="NC_010482.1"/>
</dbReference>
<dbReference type="SMR" id="B1L6Q8"/>
<dbReference type="STRING" id="374847.Kcr_1391"/>
<dbReference type="EnsemblBacteria" id="ACB08137">
    <property type="protein sequence ID" value="ACB08137"/>
    <property type="gene ID" value="Kcr_1391"/>
</dbReference>
<dbReference type="GeneID" id="6094668"/>
<dbReference type="KEGG" id="kcr:Kcr_1391"/>
<dbReference type="eggNOG" id="arCOG01085">
    <property type="taxonomic scope" value="Archaea"/>
</dbReference>
<dbReference type="HOGENOM" id="CLU_068610_0_0_2"/>
<dbReference type="InParanoid" id="B1L6Q8"/>
<dbReference type="OrthoDB" id="7409at2157"/>
<dbReference type="PhylomeDB" id="B1L6Q8"/>
<dbReference type="UniPathway" id="UPA00940"/>
<dbReference type="Proteomes" id="UP000001686">
    <property type="component" value="Chromosome"/>
</dbReference>
<dbReference type="GO" id="GO:0005737">
    <property type="term" value="C:cytoplasm"/>
    <property type="evidence" value="ECO:0007669"/>
    <property type="project" value="UniProtKB-SubCell"/>
</dbReference>
<dbReference type="GO" id="GO:0000107">
    <property type="term" value="F:imidazoleglycerol-phosphate synthase activity"/>
    <property type="evidence" value="ECO:0000318"/>
    <property type="project" value="GO_Central"/>
</dbReference>
<dbReference type="GO" id="GO:0000287">
    <property type="term" value="F:magnesium ion binding"/>
    <property type="evidence" value="ECO:0007669"/>
    <property type="project" value="UniProtKB-UniRule"/>
</dbReference>
<dbReference type="GO" id="GO:0047294">
    <property type="term" value="F:phosphoglycerol geranylgeranyltransferase activity"/>
    <property type="evidence" value="ECO:0007669"/>
    <property type="project" value="UniProtKB-UniRule"/>
</dbReference>
<dbReference type="GO" id="GO:0046474">
    <property type="term" value="P:glycerophospholipid biosynthetic process"/>
    <property type="evidence" value="ECO:0007669"/>
    <property type="project" value="UniProtKB-UniRule"/>
</dbReference>
<dbReference type="CDD" id="cd02812">
    <property type="entry name" value="PcrB_like"/>
    <property type="match status" value="1"/>
</dbReference>
<dbReference type="FunFam" id="3.20.20.390:FF:000001">
    <property type="entry name" value="Heptaprenylglyceryl phosphate synthase"/>
    <property type="match status" value="1"/>
</dbReference>
<dbReference type="Gene3D" id="3.20.20.390">
    <property type="entry name" value="FMN-linked oxidoreductases"/>
    <property type="match status" value="1"/>
</dbReference>
<dbReference type="HAMAP" id="MF_00112">
    <property type="entry name" value="GGGP_HepGP_synthase"/>
    <property type="match status" value="1"/>
</dbReference>
<dbReference type="InterPro" id="IPR038597">
    <property type="entry name" value="GGGP/HepGP_synthase_sf"/>
</dbReference>
<dbReference type="InterPro" id="IPR008205">
    <property type="entry name" value="GGGP_HepGP_synthase"/>
</dbReference>
<dbReference type="InterPro" id="IPR010946">
    <property type="entry name" value="GGGP_synth"/>
</dbReference>
<dbReference type="InterPro" id="IPR050064">
    <property type="entry name" value="IGPS_HisA/HisF"/>
</dbReference>
<dbReference type="NCBIfam" id="TIGR01769">
    <property type="entry name" value="GGGP"/>
    <property type="match status" value="1"/>
</dbReference>
<dbReference type="NCBIfam" id="TIGR01768">
    <property type="entry name" value="GGGP-family"/>
    <property type="match status" value="1"/>
</dbReference>
<dbReference type="NCBIfam" id="NF003198">
    <property type="entry name" value="PRK04169.1-2"/>
    <property type="match status" value="1"/>
</dbReference>
<dbReference type="PANTHER" id="PTHR21235:SF22">
    <property type="entry name" value="GERANYLGERANYLGLYCERYL PHOSPHATE SYNTHASE"/>
    <property type="match status" value="1"/>
</dbReference>
<dbReference type="PANTHER" id="PTHR21235">
    <property type="entry name" value="IMIDAZOLE GLYCEROL PHOSPHATE SYNTHASE SUBUNIT HISF/H IGP SYNTHASE SUBUNIT HISF/H"/>
    <property type="match status" value="1"/>
</dbReference>
<dbReference type="Pfam" id="PF01884">
    <property type="entry name" value="PcrB"/>
    <property type="match status" value="1"/>
</dbReference>
<dbReference type="SUPFAM" id="SSF51395">
    <property type="entry name" value="FMN-linked oxidoreductases"/>
    <property type="match status" value="1"/>
</dbReference>
<protein>
    <recommendedName>
        <fullName evidence="1">Geranylgeranylglyceryl phosphate synthase</fullName>
        <shortName evidence="1">GGGP synthase</shortName>
        <shortName evidence="1">GGGPS</shortName>
        <ecNumber evidence="1">2.5.1.41</ecNumber>
    </recommendedName>
    <alternativeName>
        <fullName evidence="1">(S)-3-O-geranylgeranylglyceryl phosphate synthase</fullName>
    </alternativeName>
    <alternativeName>
        <fullName evidence="1">Phosphoglycerol geranylgeranyltransferase</fullName>
    </alternativeName>
</protein>
<reference key="1">
    <citation type="journal article" date="2008" name="Proc. Natl. Acad. Sci. U.S.A.">
        <title>A korarchaeal genome reveals new insights into the evolution of the Archaea.</title>
        <authorList>
            <person name="Elkins J.G."/>
            <person name="Podar M."/>
            <person name="Graham D.E."/>
            <person name="Makarova K.S."/>
            <person name="Wolf Y."/>
            <person name="Randau L."/>
            <person name="Hedlund B.P."/>
            <person name="Brochier-Armanet C."/>
            <person name="Kunin V."/>
            <person name="Anderson I."/>
            <person name="Lapidus A."/>
            <person name="Goltsman E."/>
            <person name="Barry K."/>
            <person name="Koonin E.V."/>
            <person name="Hugenholtz P."/>
            <person name="Kyrpides N."/>
            <person name="Wanner G."/>
            <person name="Richardson P."/>
            <person name="Keller M."/>
            <person name="Stetter K.O."/>
        </authorList>
    </citation>
    <scope>NUCLEOTIDE SEQUENCE [LARGE SCALE GENOMIC DNA]</scope>
    <source>
        <strain>OPF8</strain>
    </source>
</reference>
<gene>
    <name type="ordered locus">Kcr_1391</name>
</gene>
<accession>B1L6Q8</accession>
<name>GGGPS_KORCO</name>
<evidence type="ECO:0000255" key="1">
    <source>
        <dbReference type="HAMAP-Rule" id="MF_00112"/>
    </source>
</evidence>
<evidence type="ECO:0000305" key="2"/>
<sequence length="244" mass="26153">MSLEERMRKAERTLLAVLLDPAKLDDEGARKLARAASEGGADLIFVGGSIGAGFRINEIILSVKKESNIPIILFPGNVDGVSPYADAILFMSLLNSTNPYWIIQAQALAAIPIRRMGLEAIPTAYLIVEPGQRSAAGWVGSVNPIPRDKPEIALAYATAAEMLGMRWIYLEAGSGAEAPVPSEMVRLVRERTNLGIIVGGGLRSPELVRERAEAGANVIVVGTHIEEGRDALASVREMKEALKS</sequence>
<proteinExistence type="inferred from homology"/>
<organism>
    <name type="scientific">Korarchaeum cryptofilum (strain OPF8)</name>
    <dbReference type="NCBI Taxonomy" id="374847"/>
    <lineage>
        <taxon>Archaea</taxon>
        <taxon>Thermoproteota</taxon>
        <taxon>Candidatus Korarchaeia</taxon>
        <taxon>Candidatus Korarchaeales</taxon>
        <taxon>Candidatus Korarchaeaceae</taxon>
        <taxon>Candidatus Korarchaeum</taxon>
    </lineage>
</organism>
<comment type="function">
    <text evidence="1">Prenyltransferase that catalyzes the transfer of the geranylgeranyl moiety of geranylgeranyl diphosphate (GGPP) to the C3 hydroxyl of sn-glycerol-1-phosphate (G1P). This reaction is the first ether-bond-formation step in the biosynthesis of archaeal membrane lipids.</text>
</comment>
<comment type="catalytic activity">
    <reaction evidence="1">
        <text>sn-glycerol 1-phosphate + (2E,6E,10E)-geranylgeranyl diphosphate = sn-3-O-(geranylgeranyl)glycerol 1-phosphate + diphosphate</text>
        <dbReference type="Rhea" id="RHEA:23404"/>
        <dbReference type="ChEBI" id="CHEBI:33019"/>
        <dbReference type="ChEBI" id="CHEBI:57677"/>
        <dbReference type="ChEBI" id="CHEBI:57685"/>
        <dbReference type="ChEBI" id="CHEBI:58756"/>
        <dbReference type="EC" id="2.5.1.41"/>
    </reaction>
</comment>
<comment type="cofactor">
    <cofactor evidence="1">
        <name>Mg(2+)</name>
        <dbReference type="ChEBI" id="CHEBI:18420"/>
    </cofactor>
</comment>
<comment type="pathway">
    <text evidence="1">Membrane lipid metabolism; glycerophospholipid metabolism.</text>
</comment>
<comment type="subcellular location">
    <subcellularLocation>
        <location evidence="1">Cytoplasm</location>
    </subcellularLocation>
</comment>
<comment type="similarity">
    <text evidence="1">Belongs to the GGGP/HepGP synthase family. Group II subfamily.</text>
</comment>
<comment type="sequence caution" evidence="2">
    <conflict type="erroneous initiation">
        <sequence resource="EMBL-CDS" id="ACB08137"/>
    </conflict>
</comment>
<feature type="chain" id="PRO_0000350677" description="Geranylgeranylglyceryl phosphate synthase">
    <location>
        <begin position="1"/>
        <end position="244"/>
    </location>
</feature>
<feature type="binding site" evidence="1">
    <location>
        <position position="20"/>
    </location>
    <ligand>
        <name>Mg(2+)</name>
        <dbReference type="ChEBI" id="CHEBI:18420"/>
    </ligand>
</feature>
<feature type="binding site" evidence="1">
    <location>
        <position position="49"/>
    </location>
    <ligand>
        <name>Mg(2+)</name>
        <dbReference type="ChEBI" id="CHEBI:18420"/>
    </ligand>
</feature>
<feature type="binding site" evidence="1">
    <location>
        <begin position="169"/>
        <end position="175"/>
    </location>
    <ligand>
        <name>sn-glycerol 1-phosphate</name>
        <dbReference type="ChEBI" id="CHEBI:57685"/>
    </ligand>
</feature>
<feature type="binding site" evidence="1">
    <location>
        <begin position="200"/>
        <end position="201"/>
    </location>
    <ligand>
        <name>sn-glycerol 1-phosphate</name>
        <dbReference type="ChEBI" id="CHEBI:57685"/>
    </ligand>
</feature>
<feature type="binding site" evidence="1">
    <location>
        <begin position="222"/>
        <end position="223"/>
    </location>
    <ligand>
        <name>sn-glycerol 1-phosphate</name>
        <dbReference type="ChEBI" id="CHEBI:57685"/>
    </ligand>
</feature>
<keyword id="KW-0963">Cytoplasm</keyword>
<keyword id="KW-0444">Lipid biosynthesis</keyword>
<keyword id="KW-0443">Lipid metabolism</keyword>
<keyword id="KW-0460">Magnesium</keyword>
<keyword id="KW-0479">Metal-binding</keyword>
<keyword id="KW-0594">Phospholipid biosynthesis</keyword>
<keyword id="KW-1208">Phospholipid metabolism</keyword>
<keyword id="KW-1185">Reference proteome</keyword>
<keyword id="KW-0808">Transferase</keyword>